<protein>
    <recommendedName>
        <fullName evidence="1">Peptidyl-tRNA hydrolase</fullName>
        <shortName evidence="1">Pth</shortName>
        <ecNumber evidence="1">3.1.1.29</ecNumber>
    </recommendedName>
</protein>
<evidence type="ECO:0000255" key="1">
    <source>
        <dbReference type="HAMAP-Rule" id="MF_00083"/>
    </source>
</evidence>
<accession>Q0BBQ3</accession>
<name>PTH_BURCM</name>
<dbReference type="EC" id="3.1.1.29" evidence="1"/>
<dbReference type="EMBL" id="CP000440">
    <property type="protein sequence ID" value="ABI88420.1"/>
    <property type="molecule type" value="Genomic_DNA"/>
</dbReference>
<dbReference type="RefSeq" id="WP_006760396.1">
    <property type="nucleotide sequence ID" value="NZ_CP009798.1"/>
</dbReference>
<dbReference type="SMR" id="Q0BBQ3"/>
<dbReference type="GeneID" id="93084934"/>
<dbReference type="KEGG" id="bam:Bamb_2864"/>
<dbReference type="PATRIC" id="fig|339670.21.peg.2023"/>
<dbReference type="eggNOG" id="COG0193">
    <property type="taxonomic scope" value="Bacteria"/>
</dbReference>
<dbReference type="Proteomes" id="UP000000662">
    <property type="component" value="Chromosome 1"/>
</dbReference>
<dbReference type="GO" id="GO:0005737">
    <property type="term" value="C:cytoplasm"/>
    <property type="evidence" value="ECO:0007669"/>
    <property type="project" value="UniProtKB-SubCell"/>
</dbReference>
<dbReference type="GO" id="GO:0004045">
    <property type="term" value="F:peptidyl-tRNA hydrolase activity"/>
    <property type="evidence" value="ECO:0007669"/>
    <property type="project" value="UniProtKB-UniRule"/>
</dbReference>
<dbReference type="GO" id="GO:0000049">
    <property type="term" value="F:tRNA binding"/>
    <property type="evidence" value="ECO:0007669"/>
    <property type="project" value="UniProtKB-UniRule"/>
</dbReference>
<dbReference type="GO" id="GO:0006515">
    <property type="term" value="P:protein quality control for misfolded or incompletely synthesized proteins"/>
    <property type="evidence" value="ECO:0007669"/>
    <property type="project" value="UniProtKB-UniRule"/>
</dbReference>
<dbReference type="GO" id="GO:0072344">
    <property type="term" value="P:rescue of stalled ribosome"/>
    <property type="evidence" value="ECO:0007669"/>
    <property type="project" value="UniProtKB-UniRule"/>
</dbReference>
<dbReference type="CDD" id="cd00462">
    <property type="entry name" value="PTH"/>
    <property type="match status" value="1"/>
</dbReference>
<dbReference type="FunFam" id="3.40.50.1470:FF:000001">
    <property type="entry name" value="Peptidyl-tRNA hydrolase"/>
    <property type="match status" value="1"/>
</dbReference>
<dbReference type="Gene3D" id="3.40.50.1470">
    <property type="entry name" value="Peptidyl-tRNA hydrolase"/>
    <property type="match status" value="1"/>
</dbReference>
<dbReference type="HAMAP" id="MF_00083">
    <property type="entry name" value="Pept_tRNA_hydro_bact"/>
    <property type="match status" value="1"/>
</dbReference>
<dbReference type="InterPro" id="IPR001328">
    <property type="entry name" value="Pept_tRNA_hydro"/>
</dbReference>
<dbReference type="InterPro" id="IPR018171">
    <property type="entry name" value="Pept_tRNA_hydro_CS"/>
</dbReference>
<dbReference type="InterPro" id="IPR036416">
    <property type="entry name" value="Pept_tRNA_hydro_sf"/>
</dbReference>
<dbReference type="NCBIfam" id="TIGR00447">
    <property type="entry name" value="pth"/>
    <property type="match status" value="1"/>
</dbReference>
<dbReference type="PANTHER" id="PTHR17224">
    <property type="entry name" value="PEPTIDYL-TRNA HYDROLASE"/>
    <property type="match status" value="1"/>
</dbReference>
<dbReference type="PANTHER" id="PTHR17224:SF1">
    <property type="entry name" value="PEPTIDYL-TRNA HYDROLASE"/>
    <property type="match status" value="1"/>
</dbReference>
<dbReference type="Pfam" id="PF01195">
    <property type="entry name" value="Pept_tRNA_hydro"/>
    <property type="match status" value="1"/>
</dbReference>
<dbReference type="SUPFAM" id="SSF53178">
    <property type="entry name" value="Peptidyl-tRNA hydrolase-like"/>
    <property type="match status" value="1"/>
</dbReference>
<dbReference type="PROSITE" id="PS01195">
    <property type="entry name" value="PEPT_TRNA_HYDROL_1"/>
    <property type="match status" value="1"/>
</dbReference>
<dbReference type="PROSITE" id="PS01196">
    <property type="entry name" value="PEPT_TRNA_HYDROL_2"/>
    <property type="match status" value="1"/>
</dbReference>
<proteinExistence type="inferred from homology"/>
<gene>
    <name evidence="1" type="primary">pth</name>
    <name type="ordered locus">Bamb_2864</name>
</gene>
<sequence>MIKLIVGLGNPGAEYTATRHNAGFWLVDQLAREAGATLRDERRFHGFYAKARLHGEEVHLLEPQTYMNRSGQSVVALASFFKILPDQILVAHDELDLPPGTVKLKLGGGSGGHNGLKDISAHLSSQQYWRLRIGIGHPRDLIPEGARAGAKPDVANFVLKPPRREEQDVIDASIERALAVMPMVVKGELDRATMQLHRN</sequence>
<keyword id="KW-0963">Cytoplasm</keyword>
<keyword id="KW-0378">Hydrolase</keyword>
<keyword id="KW-0694">RNA-binding</keyword>
<keyword id="KW-0820">tRNA-binding</keyword>
<reference key="1">
    <citation type="submission" date="2006-08" db="EMBL/GenBank/DDBJ databases">
        <title>Complete sequence of chromosome 1 of Burkholderia cepacia AMMD.</title>
        <authorList>
            <person name="Copeland A."/>
            <person name="Lucas S."/>
            <person name="Lapidus A."/>
            <person name="Barry K."/>
            <person name="Detter J.C."/>
            <person name="Glavina del Rio T."/>
            <person name="Hammon N."/>
            <person name="Israni S."/>
            <person name="Pitluck S."/>
            <person name="Bruce D."/>
            <person name="Chain P."/>
            <person name="Malfatti S."/>
            <person name="Shin M."/>
            <person name="Vergez L."/>
            <person name="Schmutz J."/>
            <person name="Larimer F."/>
            <person name="Land M."/>
            <person name="Hauser L."/>
            <person name="Kyrpides N."/>
            <person name="Kim E."/>
            <person name="Parke J."/>
            <person name="Coenye T."/>
            <person name="Konstantinidis K."/>
            <person name="Ramette A."/>
            <person name="Tiedje J."/>
            <person name="Richardson P."/>
        </authorList>
    </citation>
    <scope>NUCLEOTIDE SEQUENCE [LARGE SCALE GENOMIC DNA]</scope>
    <source>
        <strain>ATCC BAA-244 / DSM 16087 / CCUG 44356 / LMG 19182 / AMMD</strain>
    </source>
</reference>
<feature type="chain" id="PRO_1000010570" description="Peptidyl-tRNA hydrolase">
    <location>
        <begin position="1"/>
        <end position="199"/>
    </location>
</feature>
<feature type="active site" description="Proton acceptor" evidence="1">
    <location>
        <position position="20"/>
    </location>
</feature>
<feature type="binding site" evidence="1">
    <location>
        <position position="15"/>
    </location>
    <ligand>
        <name>tRNA</name>
        <dbReference type="ChEBI" id="CHEBI:17843"/>
    </ligand>
</feature>
<feature type="binding site" evidence="1">
    <location>
        <position position="66"/>
    </location>
    <ligand>
        <name>tRNA</name>
        <dbReference type="ChEBI" id="CHEBI:17843"/>
    </ligand>
</feature>
<feature type="binding site" evidence="1">
    <location>
        <position position="68"/>
    </location>
    <ligand>
        <name>tRNA</name>
        <dbReference type="ChEBI" id="CHEBI:17843"/>
    </ligand>
</feature>
<feature type="binding site" evidence="1">
    <location>
        <position position="114"/>
    </location>
    <ligand>
        <name>tRNA</name>
        <dbReference type="ChEBI" id="CHEBI:17843"/>
    </ligand>
</feature>
<feature type="site" description="Discriminates between blocked and unblocked aminoacyl-tRNA" evidence="1">
    <location>
        <position position="10"/>
    </location>
</feature>
<feature type="site" description="Stabilizes the basic form of H active site to accept a proton" evidence="1">
    <location>
        <position position="93"/>
    </location>
</feature>
<organism>
    <name type="scientific">Burkholderia ambifaria (strain ATCC BAA-244 / DSM 16087 / CCUG 44356 / LMG 19182 / AMMD)</name>
    <name type="common">Burkholderia cepacia (strain AMMD)</name>
    <dbReference type="NCBI Taxonomy" id="339670"/>
    <lineage>
        <taxon>Bacteria</taxon>
        <taxon>Pseudomonadati</taxon>
        <taxon>Pseudomonadota</taxon>
        <taxon>Betaproteobacteria</taxon>
        <taxon>Burkholderiales</taxon>
        <taxon>Burkholderiaceae</taxon>
        <taxon>Burkholderia</taxon>
        <taxon>Burkholderia cepacia complex</taxon>
    </lineage>
</organism>
<comment type="function">
    <text evidence="1">Hydrolyzes ribosome-free peptidyl-tRNAs (with 1 or more amino acids incorporated), which drop off the ribosome during protein synthesis, or as a result of ribosome stalling.</text>
</comment>
<comment type="function">
    <text evidence="1">Catalyzes the release of premature peptidyl moieties from peptidyl-tRNA molecules trapped in stalled 50S ribosomal subunits, and thus maintains levels of free tRNAs and 50S ribosomes.</text>
</comment>
<comment type="catalytic activity">
    <reaction evidence="1">
        <text>an N-acyl-L-alpha-aminoacyl-tRNA + H2O = an N-acyl-L-amino acid + a tRNA + H(+)</text>
        <dbReference type="Rhea" id="RHEA:54448"/>
        <dbReference type="Rhea" id="RHEA-COMP:10123"/>
        <dbReference type="Rhea" id="RHEA-COMP:13883"/>
        <dbReference type="ChEBI" id="CHEBI:15377"/>
        <dbReference type="ChEBI" id="CHEBI:15378"/>
        <dbReference type="ChEBI" id="CHEBI:59874"/>
        <dbReference type="ChEBI" id="CHEBI:78442"/>
        <dbReference type="ChEBI" id="CHEBI:138191"/>
        <dbReference type="EC" id="3.1.1.29"/>
    </reaction>
</comment>
<comment type="subunit">
    <text evidence="1">Monomer.</text>
</comment>
<comment type="subcellular location">
    <subcellularLocation>
        <location evidence="1">Cytoplasm</location>
    </subcellularLocation>
</comment>
<comment type="similarity">
    <text evidence="1">Belongs to the PTH family.</text>
</comment>